<comment type="function">
    <text evidence="1">Catalyzes the pyruvoyl-dependent decarboxylation of aspartate to produce beta-alanine.</text>
</comment>
<comment type="catalytic activity">
    <reaction evidence="1">
        <text>L-aspartate + H(+) = beta-alanine + CO2</text>
        <dbReference type="Rhea" id="RHEA:19497"/>
        <dbReference type="ChEBI" id="CHEBI:15378"/>
        <dbReference type="ChEBI" id="CHEBI:16526"/>
        <dbReference type="ChEBI" id="CHEBI:29991"/>
        <dbReference type="ChEBI" id="CHEBI:57966"/>
        <dbReference type="EC" id="4.1.1.11"/>
    </reaction>
</comment>
<comment type="cofactor">
    <cofactor evidence="1">
        <name>pyruvate</name>
        <dbReference type="ChEBI" id="CHEBI:15361"/>
    </cofactor>
    <text evidence="1">Binds 1 pyruvoyl group covalently per subunit.</text>
</comment>
<comment type="pathway">
    <text evidence="1">Cofactor biosynthesis; (R)-pantothenate biosynthesis; beta-alanine from L-aspartate: step 1/1.</text>
</comment>
<comment type="subunit">
    <text evidence="1">Heterooctamer of four alpha and four beta subunits.</text>
</comment>
<comment type="subcellular location">
    <subcellularLocation>
        <location evidence="1">Cytoplasm</location>
    </subcellularLocation>
</comment>
<comment type="PTM">
    <text evidence="1">Is synthesized initially as an inactive proenzyme, which is activated by self-cleavage at a specific serine bond to produce a beta-subunit with a hydroxyl group at its C-terminus and an alpha-subunit with a pyruvoyl group at its N-terminus.</text>
</comment>
<comment type="similarity">
    <text evidence="1">Belongs to the PanD family.</text>
</comment>
<keyword id="KW-0068">Autocatalytic cleavage</keyword>
<keyword id="KW-0963">Cytoplasm</keyword>
<keyword id="KW-0210">Decarboxylase</keyword>
<keyword id="KW-0456">Lyase</keyword>
<keyword id="KW-0566">Pantothenate biosynthesis</keyword>
<keyword id="KW-0670">Pyruvate</keyword>
<keyword id="KW-1185">Reference proteome</keyword>
<keyword id="KW-0704">Schiff base</keyword>
<keyword id="KW-0865">Zymogen</keyword>
<reference key="1">
    <citation type="journal article" date="2007" name="PLoS Biol.">
        <title>Evolution of symbiotic bacteria in the distal human intestine.</title>
        <authorList>
            <person name="Xu J."/>
            <person name="Mahowald M.A."/>
            <person name="Ley R.E."/>
            <person name="Lozupone C.A."/>
            <person name="Hamady M."/>
            <person name="Martens E.C."/>
            <person name="Henrissat B."/>
            <person name="Coutinho P.M."/>
            <person name="Minx P."/>
            <person name="Latreille P."/>
            <person name="Cordum H."/>
            <person name="Van Brunt A."/>
            <person name="Kim K."/>
            <person name="Fulton R.S."/>
            <person name="Fulton L.A."/>
            <person name="Clifton S.W."/>
            <person name="Wilson R.K."/>
            <person name="Knight R.D."/>
            <person name="Gordon J.I."/>
        </authorList>
    </citation>
    <scope>NUCLEOTIDE SEQUENCE [LARGE SCALE GENOMIC DNA]</scope>
    <source>
        <strain>ATCC 8503 / DSM 20701 / CIP 104284 / JCM 5825 / NCTC 11152</strain>
    </source>
</reference>
<protein>
    <recommendedName>
        <fullName evidence="1">Aspartate 1-decarboxylase</fullName>
        <ecNumber evidence="1">4.1.1.11</ecNumber>
    </recommendedName>
    <alternativeName>
        <fullName evidence="1">Aspartate alpha-decarboxylase</fullName>
    </alternativeName>
    <component>
        <recommendedName>
            <fullName evidence="1">Aspartate 1-decarboxylase beta chain</fullName>
        </recommendedName>
    </component>
    <component>
        <recommendedName>
            <fullName evidence="1">Aspartate 1-decarboxylase alpha chain</fullName>
        </recommendedName>
    </component>
</protein>
<dbReference type="EC" id="4.1.1.11" evidence="1"/>
<dbReference type="EMBL" id="CP000140">
    <property type="protein sequence ID" value="ABR42001.1"/>
    <property type="molecule type" value="Genomic_DNA"/>
</dbReference>
<dbReference type="RefSeq" id="WP_005861624.1">
    <property type="nucleotide sequence ID" value="NZ_LR215978.1"/>
</dbReference>
<dbReference type="SMR" id="A6L8I7"/>
<dbReference type="STRING" id="435591.BDI_0214"/>
<dbReference type="PaxDb" id="435591-BDI_0214"/>
<dbReference type="GeneID" id="93524382"/>
<dbReference type="KEGG" id="pdi:BDI_0214"/>
<dbReference type="eggNOG" id="COG0853">
    <property type="taxonomic scope" value="Bacteria"/>
</dbReference>
<dbReference type="HOGENOM" id="CLU_115305_2_0_10"/>
<dbReference type="BioCyc" id="PDIS435591:G1G5A-219-MONOMER"/>
<dbReference type="UniPathway" id="UPA00028">
    <property type="reaction ID" value="UER00002"/>
</dbReference>
<dbReference type="Proteomes" id="UP000000566">
    <property type="component" value="Chromosome"/>
</dbReference>
<dbReference type="GO" id="GO:0005829">
    <property type="term" value="C:cytosol"/>
    <property type="evidence" value="ECO:0007669"/>
    <property type="project" value="TreeGrafter"/>
</dbReference>
<dbReference type="GO" id="GO:0004068">
    <property type="term" value="F:aspartate 1-decarboxylase activity"/>
    <property type="evidence" value="ECO:0007669"/>
    <property type="project" value="UniProtKB-UniRule"/>
</dbReference>
<dbReference type="GO" id="GO:0006523">
    <property type="term" value="P:alanine biosynthetic process"/>
    <property type="evidence" value="ECO:0007669"/>
    <property type="project" value="InterPro"/>
</dbReference>
<dbReference type="GO" id="GO:0015940">
    <property type="term" value="P:pantothenate biosynthetic process"/>
    <property type="evidence" value="ECO:0007669"/>
    <property type="project" value="UniProtKB-UniRule"/>
</dbReference>
<dbReference type="CDD" id="cd06919">
    <property type="entry name" value="Asp_decarbox"/>
    <property type="match status" value="1"/>
</dbReference>
<dbReference type="Gene3D" id="2.40.40.20">
    <property type="match status" value="1"/>
</dbReference>
<dbReference type="HAMAP" id="MF_00446">
    <property type="entry name" value="PanD"/>
    <property type="match status" value="1"/>
</dbReference>
<dbReference type="InterPro" id="IPR009010">
    <property type="entry name" value="Asp_de-COase-like_dom_sf"/>
</dbReference>
<dbReference type="InterPro" id="IPR003190">
    <property type="entry name" value="Asp_decarbox"/>
</dbReference>
<dbReference type="NCBIfam" id="TIGR00223">
    <property type="entry name" value="panD"/>
    <property type="match status" value="1"/>
</dbReference>
<dbReference type="PANTHER" id="PTHR21012">
    <property type="entry name" value="ASPARTATE 1-DECARBOXYLASE"/>
    <property type="match status" value="1"/>
</dbReference>
<dbReference type="PANTHER" id="PTHR21012:SF0">
    <property type="entry name" value="ASPARTATE 1-DECARBOXYLASE"/>
    <property type="match status" value="1"/>
</dbReference>
<dbReference type="Pfam" id="PF02261">
    <property type="entry name" value="Asp_decarbox"/>
    <property type="match status" value="1"/>
</dbReference>
<dbReference type="PIRSF" id="PIRSF006246">
    <property type="entry name" value="Asp_decarbox"/>
    <property type="match status" value="1"/>
</dbReference>
<dbReference type="SUPFAM" id="SSF50692">
    <property type="entry name" value="ADC-like"/>
    <property type="match status" value="1"/>
</dbReference>
<organism>
    <name type="scientific">Parabacteroides distasonis (strain ATCC 8503 / DSM 20701 / CIP 104284 / JCM 5825 / NCTC 11152)</name>
    <dbReference type="NCBI Taxonomy" id="435591"/>
    <lineage>
        <taxon>Bacteria</taxon>
        <taxon>Pseudomonadati</taxon>
        <taxon>Bacteroidota</taxon>
        <taxon>Bacteroidia</taxon>
        <taxon>Bacteroidales</taxon>
        <taxon>Tannerellaceae</taxon>
        <taxon>Parabacteroides</taxon>
    </lineage>
</organism>
<feature type="chain" id="PRO_0000307041" description="Aspartate 1-decarboxylase beta chain" evidence="1">
    <location>
        <begin position="1"/>
        <end position="24"/>
    </location>
</feature>
<feature type="chain" id="PRO_0000307042" description="Aspartate 1-decarboxylase alpha chain" evidence="1">
    <location>
        <begin position="25"/>
        <end position="116"/>
    </location>
</feature>
<feature type="active site" description="Schiff-base intermediate with substrate; via pyruvic acid" evidence="1">
    <location>
        <position position="25"/>
    </location>
</feature>
<feature type="active site" description="Proton donor" evidence="1">
    <location>
        <position position="58"/>
    </location>
</feature>
<feature type="binding site" evidence="1">
    <location>
        <position position="57"/>
    </location>
    <ligand>
        <name>substrate</name>
    </ligand>
</feature>
<feature type="binding site" evidence="1">
    <location>
        <begin position="73"/>
        <end position="75"/>
    </location>
    <ligand>
        <name>substrate</name>
    </ligand>
</feature>
<feature type="modified residue" description="Pyruvic acid (Ser)" evidence="1">
    <location>
        <position position="25"/>
    </location>
</feature>
<proteinExistence type="inferred from homology"/>
<accession>A6L8I7</accession>
<evidence type="ECO:0000255" key="1">
    <source>
        <dbReference type="HAMAP-Rule" id="MF_00446"/>
    </source>
</evidence>
<gene>
    <name evidence="1" type="primary">panD</name>
    <name type="ordered locus">BDI_0214</name>
</gene>
<sequence>MFIEVVKSKIHRVTVTEANLNYIGSITIDEDLLDAANLIANEKVSIVNNNNGERFETYIIKGERGSGVVCLNGAAARKAQPGDIIIVMSYAMMDFEEAKTFKPSVVFPDTATNKLI</sequence>
<name>PAND_PARD8</name>